<comment type="catalytic activity">
    <reaction>
        <text>(S)-malate + ATP + CoA = (S)-malyl-CoA + ADP + phosphate</text>
        <dbReference type="Rhea" id="RHEA:26193"/>
        <dbReference type="ChEBI" id="CHEBI:15589"/>
        <dbReference type="ChEBI" id="CHEBI:30616"/>
        <dbReference type="ChEBI" id="CHEBI:43474"/>
        <dbReference type="ChEBI" id="CHEBI:57287"/>
        <dbReference type="ChEBI" id="CHEBI:57317"/>
        <dbReference type="ChEBI" id="CHEBI:456216"/>
        <dbReference type="EC" id="6.2.1.9"/>
    </reaction>
</comment>
<comment type="cofactor">
    <cofactor evidence="1">
        <name>Mg(2+)</name>
        <dbReference type="ChEBI" id="CHEBI:18420"/>
    </cofactor>
    <text evidence="1">Binds 1 Mg(2+) ion per subunit.</text>
</comment>
<comment type="pathway">
    <text>One-carbon metabolism; formaldehyde assimilation via serine pathway.</text>
</comment>
<comment type="subunit">
    <text evidence="1">Heterotetramer of two alpha and two beta subunits.</text>
</comment>
<comment type="similarity">
    <text evidence="1">Belongs to the succinate/malate CoA ligase beta subunit family.</text>
</comment>
<evidence type="ECO:0000255" key="1">
    <source>
        <dbReference type="HAMAP-Rule" id="MF_00558"/>
    </source>
</evidence>
<name>MTKA_RHILO</name>
<reference key="1">
    <citation type="journal article" date="2000" name="DNA Res.">
        <title>Complete genome structure of the nitrogen-fixing symbiotic bacterium Mesorhizobium loti.</title>
        <authorList>
            <person name="Kaneko T."/>
            <person name="Nakamura Y."/>
            <person name="Sato S."/>
            <person name="Asamizu E."/>
            <person name="Kato T."/>
            <person name="Sasamoto S."/>
            <person name="Watanabe A."/>
            <person name="Idesawa K."/>
            <person name="Ishikawa A."/>
            <person name="Kawashima K."/>
            <person name="Kimura T."/>
            <person name="Kishida Y."/>
            <person name="Kiyokawa C."/>
            <person name="Kohara M."/>
            <person name="Matsumoto M."/>
            <person name="Matsuno A."/>
            <person name="Mochizuki Y."/>
            <person name="Nakayama S."/>
            <person name="Nakazaki N."/>
            <person name="Shimpo S."/>
            <person name="Sugimoto M."/>
            <person name="Takeuchi C."/>
            <person name="Yamada M."/>
            <person name="Tabata S."/>
        </authorList>
    </citation>
    <scope>NUCLEOTIDE SEQUENCE [LARGE SCALE GENOMIC DNA]</scope>
    <source>
        <strain>LMG 29417 / CECT 9101 / MAFF 303099</strain>
    </source>
</reference>
<protein>
    <recommendedName>
        <fullName>Probable malate--CoA ligase subunit beta</fullName>
        <ecNumber>6.2.1.9</ecNumber>
    </recommendedName>
    <alternativeName>
        <fullName>MTK-beta</fullName>
    </alternativeName>
    <alternativeName>
        <fullName>Malate thiokinase</fullName>
    </alternativeName>
    <alternativeName>
        <fullName>Malyl-CoA synthetase</fullName>
    </alternativeName>
</protein>
<keyword id="KW-0067">ATP-binding</keyword>
<keyword id="KW-0436">Ligase</keyword>
<keyword id="KW-0460">Magnesium</keyword>
<keyword id="KW-0479">Metal-binding</keyword>
<keyword id="KW-0547">Nucleotide-binding</keyword>
<keyword id="KW-0816">Tricarboxylic acid cycle</keyword>
<feature type="chain" id="PRO_0000102889" description="Probable malate--CoA ligase subunit beta">
    <location>
        <begin position="1"/>
        <end position="394"/>
    </location>
</feature>
<feature type="domain" description="ATP-grasp" evidence="1">
    <location>
        <begin position="9"/>
        <end position="244"/>
    </location>
</feature>
<feature type="binding site" evidence="1">
    <location>
        <position position="46"/>
    </location>
    <ligand>
        <name>ATP</name>
        <dbReference type="ChEBI" id="CHEBI:30616"/>
    </ligand>
</feature>
<feature type="binding site" evidence="1">
    <location>
        <position position="99"/>
    </location>
    <ligand>
        <name>ATP</name>
        <dbReference type="ChEBI" id="CHEBI:30616"/>
    </ligand>
</feature>
<feature type="binding site" evidence="1">
    <location>
        <position position="102"/>
    </location>
    <ligand>
        <name>ATP</name>
        <dbReference type="ChEBI" id="CHEBI:30616"/>
    </ligand>
</feature>
<feature type="binding site" evidence="1">
    <location>
        <position position="107"/>
    </location>
    <ligand>
        <name>ATP</name>
        <dbReference type="ChEBI" id="CHEBI:30616"/>
    </ligand>
</feature>
<feature type="binding site" evidence="1">
    <location>
        <position position="199"/>
    </location>
    <ligand>
        <name>Mg(2+)</name>
        <dbReference type="ChEBI" id="CHEBI:18420"/>
    </ligand>
</feature>
<feature type="binding site" evidence="1">
    <location>
        <position position="213"/>
    </location>
    <ligand>
        <name>Mg(2+)</name>
        <dbReference type="ChEBI" id="CHEBI:18420"/>
    </ligand>
</feature>
<sequence length="394" mass="42482">MDIHEYQAKELLARHGVHVPRGGLAYSPEQATYRAREIGGGKWVLKAQVHSGARGKAGGIKLCANDEEISSAAEAMLGRKLVTQQTGPRGKLISRLYLEEAVDIAQELYVGFVLDRKEERVMIVASAAGGMEIEDIVEKEPNSILRTSVDPGVGMQRFQAREIAFGLGLDHNLIGKATETIFSCYQVFRDYDASMLEINPLVVTRDGNLIALDAKMSFDENALFRRPEISELRDKSQEDPRETFASDRGLSYVGLDGNIGCIINGAGLAMATMDMIKIAGGEPANFLDIGGGASPERVAKSFRAVLGDKNVETILVNIFAGINRCDWVAEGVIKAIREVGVNVPLVVRLSGTKAEEGRRILADSGEAVIVADTLAEAAEKAVAAWRAAAKKKAA</sequence>
<gene>
    <name type="primary">mtkA</name>
    <name type="ordered locus">mlr1324</name>
</gene>
<dbReference type="EC" id="6.2.1.9"/>
<dbReference type="EMBL" id="BA000012">
    <property type="protein sequence ID" value="BAB48725.1"/>
    <property type="molecule type" value="Genomic_DNA"/>
</dbReference>
<dbReference type="RefSeq" id="WP_010910078.1">
    <property type="nucleotide sequence ID" value="NC_002678.2"/>
</dbReference>
<dbReference type="SMR" id="Q98KT9"/>
<dbReference type="KEGG" id="mlo:mlr1324"/>
<dbReference type="eggNOG" id="COG0045">
    <property type="taxonomic scope" value="Bacteria"/>
</dbReference>
<dbReference type="HOGENOM" id="CLU_037430_0_2_5"/>
<dbReference type="UniPathway" id="UPA00927"/>
<dbReference type="Proteomes" id="UP000000552">
    <property type="component" value="Chromosome"/>
</dbReference>
<dbReference type="GO" id="GO:0005829">
    <property type="term" value="C:cytosol"/>
    <property type="evidence" value="ECO:0007669"/>
    <property type="project" value="TreeGrafter"/>
</dbReference>
<dbReference type="GO" id="GO:0042709">
    <property type="term" value="C:succinate-CoA ligase complex"/>
    <property type="evidence" value="ECO:0007669"/>
    <property type="project" value="TreeGrafter"/>
</dbReference>
<dbReference type="GO" id="GO:0005524">
    <property type="term" value="F:ATP binding"/>
    <property type="evidence" value="ECO:0007669"/>
    <property type="project" value="UniProtKB-UniRule"/>
</dbReference>
<dbReference type="GO" id="GO:0000287">
    <property type="term" value="F:magnesium ion binding"/>
    <property type="evidence" value="ECO:0007669"/>
    <property type="project" value="UniProtKB-UniRule"/>
</dbReference>
<dbReference type="GO" id="GO:0050074">
    <property type="term" value="F:malate-CoA ligase activity"/>
    <property type="evidence" value="ECO:0007669"/>
    <property type="project" value="UniProtKB-EC"/>
</dbReference>
<dbReference type="GO" id="GO:0004775">
    <property type="term" value="F:succinate-CoA ligase (ADP-forming) activity"/>
    <property type="evidence" value="ECO:0007669"/>
    <property type="project" value="UniProtKB-UniRule"/>
</dbReference>
<dbReference type="GO" id="GO:0006104">
    <property type="term" value="P:succinyl-CoA metabolic process"/>
    <property type="evidence" value="ECO:0007669"/>
    <property type="project" value="TreeGrafter"/>
</dbReference>
<dbReference type="GO" id="GO:0006099">
    <property type="term" value="P:tricarboxylic acid cycle"/>
    <property type="evidence" value="ECO:0007669"/>
    <property type="project" value="UniProtKB-UniRule"/>
</dbReference>
<dbReference type="FunFam" id="3.30.1490.20:FF:000002">
    <property type="entry name" value="Succinate--CoA ligase [ADP-forming] subunit beta"/>
    <property type="match status" value="1"/>
</dbReference>
<dbReference type="FunFam" id="3.30.470.20:FF:000002">
    <property type="entry name" value="Succinate--CoA ligase [ADP-forming] subunit beta"/>
    <property type="match status" value="1"/>
</dbReference>
<dbReference type="FunFam" id="3.40.50.261:FF:000001">
    <property type="entry name" value="Succinate--CoA ligase [ADP-forming] subunit beta"/>
    <property type="match status" value="1"/>
</dbReference>
<dbReference type="Gene3D" id="3.30.1490.20">
    <property type="entry name" value="ATP-grasp fold, A domain"/>
    <property type="match status" value="1"/>
</dbReference>
<dbReference type="Gene3D" id="3.30.470.20">
    <property type="entry name" value="ATP-grasp fold, B domain"/>
    <property type="match status" value="1"/>
</dbReference>
<dbReference type="Gene3D" id="3.40.50.261">
    <property type="entry name" value="Succinyl-CoA synthetase domains"/>
    <property type="match status" value="1"/>
</dbReference>
<dbReference type="HAMAP" id="MF_00558">
    <property type="entry name" value="Succ_CoA_beta"/>
    <property type="match status" value="1"/>
</dbReference>
<dbReference type="InterPro" id="IPR013650">
    <property type="entry name" value="ATP-grasp_succ-CoA_synth-type"/>
</dbReference>
<dbReference type="InterPro" id="IPR013815">
    <property type="entry name" value="ATP_grasp_subdomain_1"/>
</dbReference>
<dbReference type="InterPro" id="IPR017866">
    <property type="entry name" value="Succ-CoA_synthase_bsu_CS"/>
</dbReference>
<dbReference type="InterPro" id="IPR005811">
    <property type="entry name" value="SUCC_ACL_C"/>
</dbReference>
<dbReference type="InterPro" id="IPR005809">
    <property type="entry name" value="Succ_CoA_ligase-like_bsu"/>
</dbReference>
<dbReference type="InterPro" id="IPR016102">
    <property type="entry name" value="Succinyl-CoA_synth-like"/>
</dbReference>
<dbReference type="NCBIfam" id="NF001913">
    <property type="entry name" value="PRK00696.1"/>
    <property type="match status" value="1"/>
</dbReference>
<dbReference type="NCBIfam" id="NF010647">
    <property type="entry name" value="PRK14046.1"/>
    <property type="match status" value="1"/>
</dbReference>
<dbReference type="NCBIfam" id="TIGR01016">
    <property type="entry name" value="sucCoAbeta"/>
    <property type="match status" value="1"/>
</dbReference>
<dbReference type="PANTHER" id="PTHR11815:SF10">
    <property type="entry name" value="SUCCINATE--COA LIGASE [GDP-FORMING] SUBUNIT BETA, MITOCHONDRIAL"/>
    <property type="match status" value="1"/>
</dbReference>
<dbReference type="PANTHER" id="PTHR11815">
    <property type="entry name" value="SUCCINYL-COA SYNTHETASE BETA CHAIN"/>
    <property type="match status" value="1"/>
</dbReference>
<dbReference type="Pfam" id="PF08442">
    <property type="entry name" value="ATP-grasp_2"/>
    <property type="match status" value="1"/>
</dbReference>
<dbReference type="Pfam" id="PF00549">
    <property type="entry name" value="Ligase_CoA"/>
    <property type="match status" value="1"/>
</dbReference>
<dbReference type="PIRSF" id="PIRSF001554">
    <property type="entry name" value="SucCS_beta"/>
    <property type="match status" value="1"/>
</dbReference>
<dbReference type="SUPFAM" id="SSF56059">
    <property type="entry name" value="Glutathione synthetase ATP-binding domain-like"/>
    <property type="match status" value="1"/>
</dbReference>
<dbReference type="SUPFAM" id="SSF52210">
    <property type="entry name" value="Succinyl-CoA synthetase domains"/>
    <property type="match status" value="1"/>
</dbReference>
<dbReference type="PROSITE" id="PS01217">
    <property type="entry name" value="SUCCINYL_COA_LIG_3"/>
    <property type="match status" value="1"/>
</dbReference>
<organism>
    <name type="scientific">Mesorhizobium japonicum (strain LMG 29417 / CECT 9101 / MAFF 303099)</name>
    <name type="common">Mesorhizobium loti (strain MAFF 303099)</name>
    <dbReference type="NCBI Taxonomy" id="266835"/>
    <lineage>
        <taxon>Bacteria</taxon>
        <taxon>Pseudomonadati</taxon>
        <taxon>Pseudomonadota</taxon>
        <taxon>Alphaproteobacteria</taxon>
        <taxon>Hyphomicrobiales</taxon>
        <taxon>Phyllobacteriaceae</taxon>
        <taxon>Mesorhizobium</taxon>
    </lineage>
</organism>
<accession>Q98KT9</accession>
<proteinExistence type="inferred from homology"/>